<evidence type="ECO:0000255" key="1">
    <source>
        <dbReference type="HAMAP-Rule" id="MF_00211"/>
    </source>
</evidence>
<comment type="function">
    <text evidence="1">Catalyzes the transfer of the phosphoribosyl group of 5-phosphorylribose-1-pyrophosphate (PRPP) to anthranilate to yield N-(5'-phosphoribosyl)-anthranilate (PRA).</text>
</comment>
<comment type="catalytic activity">
    <reaction evidence="1">
        <text>N-(5-phospho-beta-D-ribosyl)anthranilate + diphosphate = 5-phospho-alpha-D-ribose 1-diphosphate + anthranilate</text>
        <dbReference type="Rhea" id="RHEA:11768"/>
        <dbReference type="ChEBI" id="CHEBI:16567"/>
        <dbReference type="ChEBI" id="CHEBI:18277"/>
        <dbReference type="ChEBI" id="CHEBI:33019"/>
        <dbReference type="ChEBI" id="CHEBI:58017"/>
        <dbReference type="EC" id="2.4.2.18"/>
    </reaction>
</comment>
<comment type="cofactor">
    <cofactor evidence="1">
        <name>Mg(2+)</name>
        <dbReference type="ChEBI" id="CHEBI:18420"/>
    </cofactor>
    <text evidence="1">Binds 2 magnesium ions per monomer.</text>
</comment>
<comment type="pathway">
    <text evidence="1">Amino-acid biosynthesis; L-tryptophan biosynthesis; L-tryptophan from chorismate: step 2/5.</text>
</comment>
<comment type="subunit">
    <text evidence="1">Homodimer.</text>
</comment>
<comment type="similarity">
    <text evidence="1">Belongs to the anthranilate phosphoribosyltransferase family.</text>
</comment>
<accession>B8IP99</accession>
<proteinExistence type="inferred from homology"/>
<gene>
    <name evidence="1" type="primary">trpD</name>
    <name type="ordered locus">Mnod_5575</name>
</gene>
<protein>
    <recommendedName>
        <fullName evidence="1">Anthranilate phosphoribosyltransferase</fullName>
        <ecNumber evidence="1">2.4.2.18</ecNumber>
    </recommendedName>
</protein>
<dbReference type="EC" id="2.4.2.18" evidence="1"/>
<dbReference type="EMBL" id="CP001349">
    <property type="protein sequence ID" value="ACL60417.1"/>
    <property type="molecule type" value="Genomic_DNA"/>
</dbReference>
<dbReference type="RefSeq" id="WP_015932022.1">
    <property type="nucleotide sequence ID" value="NC_011894.1"/>
</dbReference>
<dbReference type="SMR" id="B8IP99"/>
<dbReference type="STRING" id="460265.Mnod_5575"/>
<dbReference type="KEGG" id="mno:Mnod_5575"/>
<dbReference type="eggNOG" id="COG0547">
    <property type="taxonomic scope" value="Bacteria"/>
</dbReference>
<dbReference type="HOGENOM" id="CLU_034315_2_1_5"/>
<dbReference type="OrthoDB" id="9806430at2"/>
<dbReference type="UniPathway" id="UPA00035">
    <property type="reaction ID" value="UER00041"/>
</dbReference>
<dbReference type="Proteomes" id="UP000008207">
    <property type="component" value="Chromosome"/>
</dbReference>
<dbReference type="GO" id="GO:0005829">
    <property type="term" value="C:cytosol"/>
    <property type="evidence" value="ECO:0007669"/>
    <property type="project" value="TreeGrafter"/>
</dbReference>
<dbReference type="GO" id="GO:0004048">
    <property type="term" value="F:anthranilate phosphoribosyltransferase activity"/>
    <property type="evidence" value="ECO:0007669"/>
    <property type="project" value="UniProtKB-UniRule"/>
</dbReference>
<dbReference type="GO" id="GO:0000287">
    <property type="term" value="F:magnesium ion binding"/>
    <property type="evidence" value="ECO:0007669"/>
    <property type="project" value="UniProtKB-UniRule"/>
</dbReference>
<dbReference type="GO" id="GO:0000162">
    <property type="term" value="P:L-tryptophan biosynthetic process"/>
    <property type="evidence" value="ECO:0007669"/>
    <property type="project" value="UniProtKB-UniRule"/>
</dbReference>
<dbReference type="FunFam" id="3.40.1030.10:FF:000002">
    <property type="entry name" value="Anthranilate phosphoribosyltransferase"/>
    <property type="match status" value="1"/>
</dbReference>
<dbReference type="Gene3D" id="3.40.1030.10">
    <property type="entry name" value="Nucleoside phosphorylase/phosphoribosyltransferase catalytic domain"/>
    <property type="match status" value="1"/>
</dbReference>
<dbReference type="Gene3D" id="1.20.970.10">
    <property type="entry name" value="Transferase, Pyrimidine Nucleoside Phosphorylase, Chain C"/>
    <property type="match status" value="1"/>
</dbReference>
<dbReference type="HAMAP" id="MF_00211">
    <property type="entry name" value="TrpD"/>
    <property type="match status" value="1"/>
</dbReference>
<dbReference type="InterPro" id="IPR005940">
    <property type="entry name" value="Anthranilate_Pribosyl_Tfrase"/>
</dbReference>
<dbReference type="InterPro" id="IPR000312">
    <property type="entry name" value="Glycosyl_Trfase_fam3"/>
</dbReference>
<dbReference type="InterPro" id="IPR017459">
    <property type="entry name" value="Glycosyl_Trfase_fam3_N_dom"/>
</dbReference>
<dbReference type="InterPro" id="IPR036320">
    <property type="entry name" value="Glycosyl_Trfase_fam3_N_dom_sf"/>
</dbReference>
<dbReference type="InterPro" id="IPR035902">
    <property type="entry name" value="Nuc_phospho_transferase"/>
</dbReference>
<dbReference type="NCBIfam" id="TIGR01245">
    <property type="entry name" value="trpD"/>
    <property type="match status" value="1"/>
</dbReference>
<dbReference type="PANTHER" id="PTHR43285">
    <property type="entry name" value="ANTHRANILATE PHOSPHORIBOSYLTRANSFERASE"/>
    <property type="match status" value="1"/>
</dbReference>
<dbReference type="PANTHER" id="PTHR43285:SF2">
    <property type="entry name" value="ANTHRANILATE PHOSPHORIBOSYLTRANSFERASE"/>
    <property type="match status" value="1"/>
</dbReference>
<dbReference type="Pfam" id="PF02885">
    <property type="entry name" value="Glycos_trans_3N"/>
    <property type="match status" value="1"/>
</dbReference>
<dbReference type="Pfam" id="PF00591">
    <property type="entry name" value="Glycos_transf_3"/>
    <property type="match status" value="1"/>
</dbReference>
<dbReference type="SUPFAM" id="SSF52418">
    <property type="entry name" value="Nucleoside phosphorylase/phosphoribosyltransferase catalytic domain"/>
    <property type="match status" value="1"/>
</dbReference>
<dbReference type="SUPFAM" id="SSF47648">
    <property type="entry name" value="Nucleoside phosphorylase/phosphoribosyltransferase N-terminal domain"/>
    <property type="match status" value="1"/>
</dbReference>
<organism>
    <name type="scientific">Methylobacterium nodulans (strain LMG 21967 / CNCM I-2342 / ORS 2060)</name>
    <dbReference type="NCBI Taxonomy" id="460265"/>
    <lineage>
        <taxon>Bacteria</taxon>
        <taxon>Pseudomonadati</taxon>
        <taxon>Pseudomonadota</taxon>
        <taxon>Alphaproteobacteria</taxon>
        <taxon>Hyphomicrobiales</taxon>
        <taxon>Methylobacteriaceae</taxon>
        <taxon>Methylobacterium</taxon>
    </lineage>
</organism>
<name>TRPD_METNO</name>
<keyword id="KW-0028">Amino-acid biosynthesis</keyword>
<keyword id="KW-0057">Aromatic amino acid biosynthesis</keyword>
<keyword id="KW-0328">Glycosyltransferase</keyword>
<keyword id="KW-0460">Magnesium</keyword>
<keyword id="KW-0479">Metal-binding</keyword>
<keyword id="KW-1185">Reference proteome</keyword>
<keyword id="KW-0808">Transferase</keyword>
<keyword id="KW-0822">Tryptophan biosynthesis</keyword>
<feature type="chain" id="PRO_1000198830" description="Anthranilate phosphoribosyltransferase">
    <location>
        <begin position="1"/>
        <end position="337"/>
    </location>
</feature>
<feature type="binding site" evidence="1">
    <location>
        <position position="81"/>
    </location>
    <ligand>
        <name>5-phospho-alpha-D-ribose 1-diphosphate</name>
        <dbReference type="ChEBI" id="CHEBI:58017"/>
    </ligand>
</feature>
<feature type="binding site" evidence="1">
    <location>
        <position position="81"/>
    </location>
    <ligand>
        <name>anthranilate</name>
        <dbReference type="ChEBI" id="CHEBI:16567"/>
        <label>1</label>
    </ligand>
</feature>
<feature type="binding site" evidence="1">
    <location>
        <begin position="84"/>
        <end position="85"/>
    </location>
    <ligand>
        <name>5-phospho-alpha-D-ribose 1-diphosphate</name>
        <dbReference type="ChEBI" id="CHEBI:58017"/>
    </ligand>
</feature>
<feature type="binding site" evidence="1">
    <location>
        <position position="89"/>
    </location>
    <ligand>
        <name>5-phospho-alpha-D-ribose 1-diphosphate</name>
        <dbReference type="ChEBI" id="CHEBI:58017"/>
    </ligand>
</feature>
<feature type="binding site" evidence="1">
    <location>
        <begin position="91"/>
        <end position="94"/>
    </location>
    <ligand>
        <name>5-phospho-alpha-D-ribose 1-diphosphate</name>
        <dbReference type="ChEBI" id="CHEBI:58017"/>
    </ligand>
</feature>
<feature type="binding site" evidence="1">
    <location>
        <position position="93"/>
    </location>
    <ligand>
        <name>Mg(2+)</name>
        <dbReference type="ChEBI" id="CHEBI:18420"/>
        <label>1</label>
    </ligand>
</feature>
<feature type="binding site" evidence="1">
    <location>
        <begin position="109"/>
        <end position="117"/>
    </location>
    <ligand>
        <name>5-phospho-alpha-D-ribose 1-diphosphate</name>
        <dbReference type="ChEBI" id="CHEBI:58017"/>
    </ligand>
</feature>
<feature type="binding site" evidence="1">
    <location>
        <position position="112"/>
    </location>
    <ligand>
        <name>anthranilate</name>
        <dbReference type="ChEBI" id="CHEBI:16567"/>
        <label>1</label>
    </ligand>
</feature>
<feature type="binding site" evidence="1">
    <location>
        <position position="121"/>
    </location>
    <ligand>
        <name>5-phospho-alpha-D-ribose 1-diphosphate</name>
        <dbReference type="ChEBI" id="CHEBI:58017"/>
    </ligand>
</feature>
<feature type="binding site" evidence="1">
    <location>
        <position position="167"/>
    </location>
    <ligand>
        <name>anthranilate</name>
        <dbReference type="ChEBI" id="CHEBI:16567"/>
        <label>2</label>
    </ligand>
</feature>
<feature type="binding site" evidence="1">
    <location>
        <position position="226"/>
    </location>
    <ligand>
        <name>Mg(2+)</name>
        <dbReference type="ChEBI" id="CHEBI:18420"/>
        <label>2</label>
    </ligand>
</feature>
<feature type="binding site" evidence="1">
    <location>
        <position position="227"/>
    </location>
    <ligand>
        <name>Mg(2+)</name>
        <dbReference type="ChEBI" id="CHEBI:18420"/>
        <label>1</label>
    </ligand>
</feature>
<feature type="binding site" evidence="1">
    <location>
        <position position="227"/>
    </location>
    <ligand>
        <name>Mg(2+)</name>
        <dbReference type="ChEBI" id="CHEBI:18420"/>
        <label>2</label>
    </ligand>
</feature>
<reference key="1">
    <citation type="submission" date="2009-01" db="EMBL/GenBank/DDBJ databases">
        <title>Complete sequence of chromosome of Methylobacterium nodulans ORS 2060.</title>
        <authorList>
            <consortium name="US DOE Joint Genome Institute"/>
            <person name="Lucas S."/>
            <person name="Copeland A."/>
            <person name="Lapidus A."/>
            <person name="Glavina del Rio T."/>
            <person name="Dalin E."/>
            <person name="Tice H."/>
            <person name="Bruce D."/>
            <person name="Goodwin L."/>
            <person name="Pitluck S."/>
            <person name="Sims D."/>
            <person name="Brettin T."/>
            <person name="Detter J.C."/>
            <person name="Han C."/>
            <person name="Larimer F."/>
            <person name="Land M."/>
            <person name="Hauser L."/>
            <person name="Kyrpides N."/>
            <person name="Ivanova N."/>
            <person name="Marx C.J."/>
            <person name="Richardson P."/>
        </authorList>
    </citation>
    <scope>NUCLEOTIDE SEQUENCE [LARGE SCALE GENOMIC DNA]</scope>
    <source>
        <strain>LMG 21967 / CNCM I-2342 / ORS 2060</strain>
    </source>
</reference>
<sequence>MDSFKPYLAKVATGAALTREEARTAFDHLLSGEVTHAQAGAFLMALRVRGEAADEIVGAAGALRERMVRVAAPPGAIDIVGTGGDHSGSYNVSTLAAIITASCGVPVAKHGNRAASSRSGAADVLAALGVRLGLDPEALAQCLAQAGLCFMFAQTHHASMRHVAPVRVELGTRTLFNVLGPLCNPAGVSGQLFGVYAASLAEPLTRVLADLGSTRVWTVHGSDGLDEITTTGPTAVVALEDGAIRRFTIDPRELGLALAAPEDLRGADPEHNAAALRAVLDGARTPYRDIAVLNAAAALVVAGAAANLGEGVARAAQAVDSGAARATLDRLVAVSNA</sequence>